<keyword id="KW-1185">Reference proteome</keyword>
<gene>
    <name evidence="2" type="primary">ymjE</name>
    <name type="ordered locus">b4742</name>
</gene>
<protein>
    <recommendedName>
        <fullName evidence="2">Protein YmjE</fullName>
    </recommendedName>
</protein>
<dbReference type="EMBL" id="U00096">
    <property type="protein sequence ID" value="AYC08200.1"/>
    <property type="molecule type" value="Genomic_DNA"/>
</dbReference>
<dbReference type="FunCoup" id="P0DPO2">
    <property type="interactions" value="3"/>
</dbReference>
<dbReference type="EnsemblBacteria" id="AYC08200">
    <property type="protein sequence ID" value="AYC08200"/>
    <property type="gene ID" value="b4742"/>
</dbReference>
<dbReference type="InParanoid" id="P0DPO2"/>
<dbReference type="BioCyc" id="EcoCyc:MONOMER0-4419"/>
<dbReference type="PRO" id="PR:P0DPO2"/>
<dbReference type="Proteomes" id="UP000000625">
    <property type="component" value="Chromosome"/>
</dbReference>
<dbReference type="Pfam" id="PF23692">
    <property type="entry name" value="YmjE"/>
    <property type="match status" value="1"/>
</dbReference>
<reference key="1">
    <citation type="journal article" date="1997" name="Science">
        <title>The complete genome sequence of Escherichia coli K-12.</title>
        <authorList>
            <person name="Blattner F.R."/>
            <person name="Plunkett G. III"/>
            <person name="Bloch C.A."/>
            <person name="Perna N.T."/>
            <person name="Burland V."/>
            <person name="Riley M."/>
            <person name="Collado-Vides J."/>
            <person name="Glasner J.D."/>
            <person name="Rode C.K."/>
            <person name="Mayhew G.F."/>
            <person name="Gregor J."/>
            <person name="Davis N.W."/>
            <person name="Kirkpatrick H.A."/>
            <person name="Goeden M.A."/>
            <person name="Rose D.J."/>
            <person name="Mau B."/>
            <person name="Shao Y."/>
        </authorList>
    </citation>
    <scope>NUCLEOTIDE SEQUENCE [LARGE SCALE GENOMIC DNA]</scope>
    <source>
        <strain>K12 / MG1655 / ATCC 47076</strain>
    </source>
</reference>
<reference key="2">
    <citation type="journal article" date="2018" name="Proteomics">
        <title>Identifying new small proteins in Escherichia coli.</title>
        <authorList>
            <person name="VanOrsdel C.E."/>
            <person name="Kelly J.P."/>
            <person name="Burke B.N."/>
            <person name="Lein C.D."/>
            <person name="Oufiero C.E."/>
            <person name="Sanchez J.F."/>
            <person name="Wimmers L.E."/>
            <person name="Hearn D.J."/>
            <person name="Abuikhdair F.J."/>
            <person name="Barnhart K.R."/>
            <person name="Duley M.L."/>
            <person name="Ernst S.E.G."/>
            <person name="Kenerson B.A."/>
            <person name="Serafin A.J."/>
            <person name="Hemm M.R."/>
        </authorList>
    </citation>
    <scope>IDENTIFICATION</scope>
    <scope>INDUCTION</scope>
</reference>
<organism>
    <name type="scientific">Escherichia coli (strain K12)</name>
    <dbReference type="NCBI Taxonomy" id="83333"/>
    <lineage>
        <taxon>Bacteria</taxon>
        <taxon>Pseudomonadati</taxon>
        <taxon>Pseudomonadota</taxon>
        <taxon>Gammaproteobacteria</taxon>
        <taxon>Enterobacterales</taxon>
        <taxon>Enterobacteriaceae</taxon>
        <taxon>Escherichia</taxon>
    </lineage>
</organism>
<name>YMJE_ECOLI</name>
<comment type="induction">
    <text evidence="1">Expressed approximately equally in exponential and stationary phases (at protein level).</text>
</comment>
<sequence length="54" mass="5971">MPMIKSPHGEGGCVCAPPATDWTPPPLLPLLNRFDFRSTRPQTLLRRGGSNYGY</sequence>
<feature type="chain" id="PRO_0000445170" description="Protein YmjE">
    <location>
        <begin position="1"/>
        <end position="54"/>
    </location>
</feature>
<proteinExistence type="evidence at protein level"/>
<evidence type="ECO:0000269" key="1">
    <source>
    </source>
</evidence>
<evidence type="ECO:0000303" key="2">
    <source>
    </source>
</evidence>
<accession>P0DPO2</accession>
<accession>A0A385XJE9</accession>